<reference key="1">
    <citation type="journal article" date="2000" name="Proc. Natl. Acad. Sci. U.S.A.">
        <title>Archaeal adaptation to higher temperatures revealed by genomic sequence of Thermoplasma volcanium.</title>
        <authorList>
            <person name="Kawashima T."/>
            <person name="Amano N."/>
            <person name="Koike H."/>
            <person name="Makino S."/>
            <person name="Higuchi S."/>
            <person name="Kawashima-Ohya Y."/>
            <person name="Watanabe K."/>
            <person name="Yamazaki M."/>
            <person name="Kanehori K."/>
            <person name="Kawamoto T."/>
            <person name="Nunoshiba T."/>
            <person name="Yamamoto Y."/>
            <person name="Aramaki H."/>
            <person name="Makino K."/>
            <person name="Suzuki M."/>
        </authorList>
    </citation>
    <scope>NUCLEOTIDE SEQUENCE [LARGE SCALE GENOMIC DNA]</scope>
    <source>
        <strain>ATCC 51530 / DSM 4299 / JCM 9571 / NBRC 15438 / GSS1</strain>
    </source>
</reference>
<comment type="function">
    <text evidence="1">Catalyzes the irreversible transfer of a propylamine group from the amino donor S-adenosylmethioninamine (decarboxy-AdoMet) to putrescine (1,4-diaminobutane) to yield spermidine.</text>
</comment>
<comment type="catalytic activity">
    <reaction evidence="1">
        <text>S-adenosyl 3-(methylsulfanyl)propylamine + putrescine = S-methyl-5'-thioadenosine + spermidine + H(+)</text>
        <dbReference type="Rhea" id="RHEA:12721"/>
        <dbReference type="ChEBI" id="CHEBI:15378"/>
        <dbReference type="ChEBI" id="CHEBI:17509"/>
        <dbReference type="ChEBI" id="CHEBI:57443"/>
        <dbReference type="ChEBI" id="CHEBI:57834"/>
        <dbReference type="ChEBI" id="CHEBI:326268"/>
        <dbReference type="EC" id="2.5.1.16"/>
    </reaction>
</comment>
<comment type="pathway">
    <text evidence="1">Amine and polyamine biosynthesis; spermidine biosynthesis; spermidine from putrescine: step 1/1.</text>
</comment>
<comment type="subunit">
    <text evidence="1">Homodimer or homotetramer.</text>
</comment>
<comment type="subcellular location">
    <subcellularLocation>
        <location evidence="1">Cytoplasm</location>
    </subcellularLocation>
</comment>
<comment type="similarity">
    <text evidence="1">Belongs to the spermidine/spermine synthase family.</text>
</comment>
<evidence type="ECO:0000255" key="1">
    <source>
        <dbReference type="HAMAP-Rule" id="MF_00198"/>
    </source>
</evidence>
<protein>
    <recommendedName>
        <fullName evidence="1">Polyamine aminopropyltransferase</fullName>
    </recommendedName>
    <alternativeName>
        <fullName evidence="1">Putrescine aminopropyltransferase</fullName>
        <shortName evidence="1">PAPT</shortName>
    </alternativeName>
    <alternativeName>
        <fullName evidence="1">Spermidine synthase</fullName>
        <shortName evidence="1">SPDS</shortName>
        <shortName evidence="1">SPDSY</shortName>
        <ecNumber evidence="1">2.5.1.16</ecNumber>
    </alternativeName>
</protein>
<accession>Q97BN7</accession>
<name>SPEE_THEVO</name>
<proteinExistence type="inferred from homology"/>
<dbReference type="EC" id="2.5.1.16" evidence="1"/>
<dbReference type="EMBL" id="BA000011">
    <property type="protein sequence ID" value="BAB59560.1"/>
    <property type="molecule type" value="Genomic_DNA"/>
</dbReference>
<dbReference type="RefSeq" id="WP_010916675.1">
    <property type="nucleotide sequence ID" value="NC_002689.2"/>
</dbReference>
<dbReference type="SMR" id="Q97BN7"/>
<dbReference type="STRING" id="273116.gene:9381196"/>
<dbReference type="PaxDb" id="273116-14324633"/>
<dbReference type="GeneID" id="1440933"/>
<dbReference type="KEGG" id="tvo:TVG0404401"/>
<dbReference type="eggNOG" id="arCOG00050">
    <property type="taxonomic scope" value="Archaea"/>
</dbReference>
<dbReference type="HOGENOM" id="CLU_048199_0_0_2"/>
<dbReference type="OrthoDB" id="10538at2157"/>
<dbReference type="PhylomeDB" id="Q97BN7"/>
<dbReference type="UniPathway" id="UPA00248">
    <property type="reaction ID" value="UER00314"/>
</dbReference>
<dbReference type="Proteomes" id="UP000001017">
    <property type="component" value="Chromosome"/>
</dbReference>
<dbReference type="GO" id="GO:0005737">
    <property type="term" value="C:cytoplasm"/>
    <property type="evidence" value="ECO:0007669"/>
    <property type="project" value="UniProtKB-SubCell"/>
</dbReference>
<dbReference type="GO" id="GO:0004766">
    <property type="term" value="F:spermidine synthase activity"/>
    <property type="evidence" value="ECO:0007669"/>
    <property type="project" value="UniProtKB-UniRule"/>
</dbReference>
<dbReference type="GO" id="GO:0008295">
    <property type="term" value="P:spermidine biosynthetic process"/>
    <property type="evidence" value="ECO:0007669"/>
    <property type="project" value="UniProtKB-UniRule"/>
</dbReference>
<dbReference type="Gene3D" id="2.30.140.10">
    <property type="entry name" value="Spermidine synthase, tetramerisation domain"/>
    <property type="match status" value="1"/>
</dbReference>
<dbReference type="Gene3D" id="3.40.50.150">
    <property type="entry name" value="Vaccinia Virus protein VP39"/>
    <property type="match status" value="1"/>
</dbReference>
<dbReference type="HAMAP" id="MF_00198">
    <property type="entry name" value="Spermidine_synth"/>
    <property type="match status" value="1"/>
</dbReference>
<dbReference type="InterPro" id="IPR030374">
    <property type="entry name" value="PABS"/>
</dbReference>
<dbReference type="InterPro" id="IPR029063">
    <property type="entry name" value="SAM-dependent_MTases_sf"/>
</dbReference>
<dbReference type="InterPro" id="IPR001045">
    <property type="entry name" value="Spermi_synthase"/>
</dbReference>
<dbReference type="InterPro" id="IPR035246">
    <property type="entry name" value="Spermidine_synt_N"/>
</dbReference>
<dbReference type="InterPro" id="IPR037163">
    <property type="entry name" value="Spermidine_synt_N_sf"/>
</dbReference>
<dbReference type="NCBIfam" id="NF002010">
    <property type="entry name" value="PRK00811.1"/>
    <property type="match status" value="1"/>
</dbReference>
<dbReference type="NCBIfam" id="TIGR00417">
    <property type="entry name" value="speE"/>
    <property type="match status" value="1"/>
</dbReference>
<dbReference type="PANTHER" id="PTHR11558:SF11">
    <property type="entry name" value="SPERMIDINE SYNTHASE"/>
    <property type="match status" value="1"/>
</dbReference>
<dbReference type="PANTHER" id="PTHR11558">
    <property type="entry name" value="SPERMIDINE/SPERMINE SYNTHASE"/>
    <property type="match status" value="1"/>
</dbReference>
<dbReference type="Pfam" id="PF17284">
    <property type="entry name" value="Spermine_synt_N"/>
    <property type="match status" value="1"/>
</dbReference>
<dbReference type="Pfam" id="PF01564">
    <property type="entry name" value="Spermine_synth"/>
    <property type="match status" value="1"/>
</dbReference>
<dbReference type="SUPFAM" id="SSF53335">
    <property type="entry name" value="S-adenosyl-L-methionine-dependent methyltransferases"/>
    <property type="match status" value="1"/>
</dbReference>
<dbReference type="PROSITE" id="PS51006">
    <property type="entry name" value="PABS_2"/>
    <property type="match status" value="1"/>
</dbReference>
<gene>
    <name evidence="1" type="primary">speE</name>
    <name type="ordered locus">TV0418</name>
    <name type="ORF">TVG0404401</name>
</gene>
<organism>
    <name type="scientific">Thermoplasma volcanium (strain ATCC 51530 / DSM 4299 / JCM 9571 / NBRC 15438 / GSS1)</name>
    <dbReference type="NCBI Taxonomy" id="273116"/>
    <lineage>
        <taxon>Archaea</taxon>
        <taxon>Methanobacteriati</taxon>
        <taxon>Thermoplasmatota</taxon>
        <taxon>Thermoplasmata</taxon>
        <taxon>Thermoplasmatales</taxon>
        <taxon>Thermoplasmataceae</taxon>
        <taxon>Thermoplasma</taxon>
    </lineage>
</organism>
<keyword id="KW-0963">Cytoplasm</keyword>
<keyword id="KW-0620">Polyamine biosynthesis</keyword>
<keyword id="KW-0745">Spermidine biosynthesis</keyword>
<keyword id="KW-0808">Transferase</keyword>
<feature type="chain" id="PRO_0000156537" description="Polyamine aminopropyltransferase">
    <location>
        <begin position="1"/>
        <end position="273"/>
    </location>
</feature>
<feature type="domain" description="PABS" evidence="1">
    <location>
        <begin position="5"/>
        <end position="238"/>
    </location>
</feature>
<feature type="active site" description="Proton acceptor" evidence="1">
    <location>
        <position position="158"/>
    </location>
</feature>
<feature type="binding site" evidence="1">
    <location>
        <position position="34"/>
    </location>
    <ligand>
        <name>S-methyl-5'-thioadenosine</name>
        <dbReference type="ChEBI" id="CHEBI:17509"/>
    </ligand>
</feature>
<feature type="binding site" evidence="1">
    <location>
        <position position="65"/>
    </location>
    <ligand>
        <name>spermidine</name>
        <dbReference type="ChEBI" id="CHEBI:57834"/>
    </ligand>
</feature>
<feature type="binding site" evidence="1">
    <location>
        <position position="90"/>
    </location>
    <ligand>
        <name>spermidine</name>
        <dbReference type="ChEBI" id="CHEBI:57834"/>
    </ligand>
</feature>
<feature type="binding site" evidence="1">
    <location>
        <position position="109"/>
    </location>
    <ligand>
        <name>S-methyl-5'-thioadenosine</name>
        <dbReference type="ChEBI" id="CHEBI:17509"/>
    </ligand>
</feature>
<feature type="binding site" evidence="1">
    <location>
        <begin position="140"/>
        <end position="141"/>
    </location>
    <ligand>
        <name>S-methyl-5'-thioadenosine</name>
        <dbReference type="ChEBI" id="CHEBI:17509"/>
    </ligand>
</feature>
<feature type="binding site" evidence="1">
    <location>
        <begin position="158"/>
        <end position="161"/>
    </location>
    <ligand>
        <name>spermidine</name>
        <dbReference type="ChEBI" id="CHEBI:57834"/>
    </ligand>
</feature>
<feature type="binding site" evidence="1">
    <location>
        <position position="165"/>
    </location>
    <ligand>
        <name>S-methyl-5'-thioadenosine</name>
        <dbReference type="ChEBI" id="CHEBI:17509"/>
    </ligand>
</feature>
<sequence length="273" mass="30970">MKLIENWFSERYSDNLQLSFRVSDQLLSIKTDYQRIDLFDTYDFGKLLAIDGTVQLTERDEYIYHELITMIPYHMTKNPPQSALVIGGGDGGAARRLLDLGLNKIVNVEIDGQVVEVSKRFFPDLSSAFTDKRVNLIIDDGIKYVRKCNEKFDLVIIDSTDPEGPAEGLFSMEFYSDITKILSDGGVIVSQSGSPFYQPKALKLAYTGMRRLFKDVKVYTGFIPTYPSGFWSFTIASEDAMNPRKPAIKGKYFNEDVLDGVFKLPQFVKDLIT</sequence>